<dbReference type="EMBL" id="AB429304">
    <property type="protein sequence ID" value="BAG15881.1"/>
    <property type="molecule type" value="mRNA"/>
</dbReference>
<dbReference type="EMBL" id="KM400475">
    <property type="protein sequence ID" value="AIU51104.1"/>
    <property type="molecule type" value="mRNA"/>
</dbReference>
<dbReference type="EMBL" id="AB025621">
    <property type="protein sequence ID" value="BAB09754.1"/>
    <property type="molecule type" value="Genomic_DNA"/>
</dbReference>
<dbReference type="EMBL" id="CP002688">
    <property type="protein sequence ID" value="AED96080.1"/>
    <property type="molecule type" value="Genomic_DNA"/>
</dbReference>
<dbReference type="EMBL" id="AK228749">
    <property type="protein sequence ID" value="BAF00649.1"/>
    <property type="molecule type" value="mRNA"/>
</dbReference>
<dbReference type="RefSeq" id="NP_199956.1">
    <property type="nucleotide sequence ID" value="NM_124522.4"/>
</dbReference>
<dbReference type="FunCoup" id="Q9FGN0">
    <property type="interactions" value="3995"/>
</dbReference>
<dbReference type="IntAct" id="Q9FGN0">
    <property type="interactions" value="2"/>
</dbReference>
<dbReference type="STRING" id="3702.Q9FGN0"/>
<dbReference type="GlyGen" id="Q9FGN0">
    <property type="glycosylation" value="1 site"/>
</dbReference>
<dbReference type="PaxDb" id="3702-AT5G51430.1"/>
<dbReference type="ProteomicsDB" id="187189"/>
<dbReference type="EnsemblPlants" id="AT5G51430.1">
    <property type="protein sequence ID" value="AT5G51430.1"/>
    <property type="gene ID" value="AT5G51430"/>
</dbReference>
<dbReference type="GeneID" id="835217"/>
<dbReference type="Gramene" id="AT5G51430.1">
    <property type="protein sequence ID" value="AT5G51430.1"/>
    <property type="gene ID" value="AT5G51430"/>
</dbReference>
<dbReference type="KEGG" id="ath:AT5G51430"/>
<dbReference type="Araport" id="AT5G51430"/>
<dbReference type="TAIR" id="AT5G51430">
    <property type="gene designation" value="EYE"/>
</dbReference>
<dbReference type="eggNOG" id="KOG4182">
    <property type="taxonomic scope" value="Eukaryota"/>
</dbReference>
<dbReference type="HOGENOM" id="CLU_006044_1_0_1"/>
<dbReference type="InParanoid" id="Q9FGN0"/>
<dbReference type="OMA" id="LKYYHNC"/>
<dbReference type="OrthoDB" id="245173at2759"/>
<dbReference type="PhylomeDB" id="Q9FGN0"/>
<dbReference type="PRO" id="PR:Q9FGN0"/>
<dbReference type="Proteomes" id="UP000006548">
    <property type="component" value="Chromosome 5"/>
</dbReference>
<dbReference type="ExpressionAtlas" id="Q9FGN0">
    <property type="expression patterns" value="baseline and differential"/>
</dbReference>
<dbReference type="GO" id="GO:0000139">
    <property type="term" value="C:Golgi membrane"/>
    <property type="evidence" value="ECO:0007669"/>
    <property type="project" value="UniProtKB-SubCell"/>
</dbReference>
<dbReference type="GO" id="GO:0017119">
    <property type="term" value="C:Golgi transport complex"/>
    <property type="evidence" value="ECO:0007669"/>
    <property type="project" value="InterPro"/>
</dbReference>
<dbReference type="GO" id="GO:0009793">
    <property type="term" value="P:embryo development ending in seed dormancy"/>
    <property type="evidence" value="ECO:0000315"/>
    <property type="project" value="TAIR"/>
</dbReference>
<dbReference type="GO" id="GO:0007030">
    <property type="term" value="P:Golgi organization"/>
    <property type="evidence" value="ECO:0000315"/>
    <property type="project" value="TAIR"/>
</dbReference>
<dbReference type="GO" id="GO:0006886">
    <property type="term" value="P:intracellular protein transport"/>
    <property type="evidence" value="ECO:0007669"/>
    <property type="project" value="InterPro"/>
</dbReference>
<dbReference type="GO" id="GO:0048507">
    <property type="term" value="P:meristem development"/>
    <property type="evidence" value="ECO:0000315"/>
    <property type="project" value="TAIR"/>
</dbReference>
<dbReference type="GO" id="GO:0009933">
    <property type="term" value="P:meristem structural organization"/>
    <property type="evidence" value="ECO:0000315"/>
    <property type="project" value="TAIR"/>
</dbReference>
<dbReference type="GO" id="GO:0045053">
    <property type="term" value="P:protein retention in Golgi apparatus"/>
    <property type="evidence" value="ECO:0000315"/>
    <property type="project" value="TAIR"/>
</dbReference>
<dbReference type="GO" id="GO:0010016">
    <property type="term" value="P:shoot system morphogenesis"/>
    <property type="evidence" value="ECO:0000315"/>
    <property type="project" value="TAIR"/>
</dbReference>
<dbReference type="GO" id="GO:0009826">
    <property type="term" value="P:unidimensional cell growth"/>
    <property type="evidence" value="ECO:0000315"/>
    <property type="project" value="TAIR"/>
</dbReference>
<dbReference type="InterPro" id="IPR019335">
    <property type="entry name" value="COG7"/>
</dbReference>
<dbReference type="PANTHER" id="PTHR21443">
    <property type="entry name" value="CONSERVED OLIGOMERIC GOLGI COMPLEX COMPONENT 7"/>
    <property type="match status" value="1"/>
</dbReference>
<dbReference type="PANTHER" id="PTHR21443:SF0">
    <property type="entry name" value="CONSERVED OLIGOMERIC GOLGI COMPLEX SUBUNIT 7"/>
    <property type="match status" value="1"/>
</dbReference>
<dbReference type="Pfam" id="PF10191">
    <property type="entry name" value="COG7"/>
    <property type="match status" value="1"/>
</dbReference>
<feature type="chain" id="PRO_0000448529" description="Conserved oligomeric Golgi complex subunit 7">
    <location>
        <begin position="1"/>
        <end position="836"/>
    </location>
</feature>
<feature type="region of interest" description="Disordered" evidence="3">
    <location>
        <begin position="246"/>
        <end position="265"/>
    </location>
</feature>
<feature type="coiled-coil region" evidence="2">
    <location>
        <begin position="29"/>
        <end position="49"/>
    </location>
</feature>
<feature type="coiled-coil region" evidence="2">
    <location>
        <begin position="107"/>
        <end position="127"/>
    </location>
</feature>
<feature type="sequence conflict" description="In Ref. 1; BAG15881." evidence="8" ref="1">
    <original>L</original>
    <variation>R</variation>
    <location>
        <position position="284"/>
    </location>
</feature>
<feature type="sequence conflict" description="In Ref. 5; BAF00649." evidence="8" ref="5">
    <original>A</original>
    <variation>P</variation>
    <location>
        <position position="612"/>
    </location>
</feature>
<feature type="sequence conflict" description="In Ref. 2; AIU51104." evidence="8" ref="2">
    <location>
        <position position="724"/>
    </location>
</feature>
<feature type="sequence conflict" description="In Ref. 1; BAG15881." evidence="8" ref="1">
    <original>N</original>
    <variation>S</variation>
    <location>
        <position position="825"/>
    </location>
</feature>
<name>COG7_ARATH</name>
<proteinExistence type="evidence at protein level"/>
<reference key="1">
    <citation type="journal article" date="2008" name="Genes Cells">
        <title>EMBRYO YELLOW gene, encoding a subunit of the conserved oligomeric Golgi complex, is required for appropriate cell expansion and meristem organization in Arabidopsis thaliana.</title>
        <authorList>
            <person name="Ishikawa T."/>
            <person name="Machida C."/>
            <person name="Yoshioka Y."/>
            <person name="Ueda T."/>
            <person name="Nakano A."/>
            <person name="Machida Y."/>
        </authorList>
    </citation>
    <scope>NUCLEOTIDE SEQUENCE [MRNA]</scope>
    <scope>FUNCTION</scope>
    <scope>DISRUPTION PHENOTYPE</scope>
</reference>
<reference key="2">
    <citation type="journal article" date="2014" name="Nat. Commun.">
        <title>Resolution of deep angiosperm phylogeny using conserved nuclear genes and estimates of early divergence times.</title>
        <authorList>
            <person name="Zeng L."/>
            <person name="Zhang Q."/>
            <person name="Sun R."/>
            <person name="Kong H."/>
            <person name="Zhang N."/>
            <person name="Ma H."/>
        </authorList>
    </citation>
    <scope>NUCLEOTIDE SEQUENCE [MRNA]</scope>
</reference>
<reference key="3">
    <citation type="submission" date="1999-04" db="EMBL/GenBank/DDBJ databases">
        <title>Structural analysis of Arabidopsis thaliana chromosome 5. XI.</title>
        <authorList>
            <person name="Kaneko T."/>
            <person name="Katoh T."/>
            <person name="Asamizu E."/>
            <person name="Sato S."/>
            <person name="Nakamura Y."/>
            <person name="Kotani H."/>
            <person name="Tabata S."/>
        </authorList>
    </citation>
    <scope>NUCLEOTIDE SEQUENCE [LARGE SCALE GENOMIC DNA]</scope>
    <source>
        <strain>cv. Columbia</strain>
    </source>
</reference>
<reference key="4">
    <citation type="journal article" date="2017" name="Plant J.">
        <title>Araport11: a complete reannotation of the Arabidopsis thaliana reference genome.</title>
        <authorList>
            <person name="Cheng C.Y."/>
            <person name="Krishnakumar V."/>
            <person name="Chan A.P."/>
            <person name="Thibaud-Nissen F."/>
            <person name="Schobel S."/>
            <person name="Town C.D."/>
        </authorList>
    </citation>
    <scope>GENOME REANNOTATION</scope>
    <source>
        <strain>cv. Columbia</strain>
    </source>
</reference>
<reference key="5">
    <citation type="submission" date="2006-07" db="EMBL/GenBank/DDBJ databases">
        <title>Large-scale analysis of RIKEN Arabidopsis full-length (RAFL) cDNAs.</title>
        <authorList>
            <person name="Totoki Y."/>
            <person name="Seki M."/>
            <person name="Ishida J."/>
            <person name="Nakajima M."/>
            <person name="Enju A."/>
            <person name="Kamiya A."/>
            <person name="Narusaka M."/>
            <person name="Shin-i T."/>
            <person name="Nakagawa M."/>
            <person name="Sakamoto N."/>
            <person name="Oishi K."/>
            <person name="Kohara Y."/>
            <person name="Kobayashi M."/>
            <person name="Toyoda A."/>
            <person name="Sakaki Y."/>
            <person name="Sakurai T."/>
            <person name="Iida K."/>
            <person name="Akiyama K."/>
            <person name="Satou M."/>
            <person name="Toyoda T."/>
            <person name="Konagaya A."/>
            <person name="Carninci P."/>
            <person name="Kawai J."/>
            <person name="Hayashizaki Y."/>
            <person name="Shinozaki K."/>
        </authorList>
    </citation>
    <scope>NUCLEOTIDE SEQUENCE [LARGE SCALE MRNA]</scope>
    <source>
        <strain>cv. Columbia</strain>
    </source>
</reference>
<reference key="6">
    <citation type="journal article" date="2012" name="Mol. Cell. Proteomics">
        <title>Comparative large-scale characterisation of plant vs. mammal proteins reveals similar and idiosyncratic N-alpha acetylation features.</title>
        <authorList>
            <person name="Bienvenut W.V."/>
            <person name="Sumpton D."/>
            <person name="Martinez A."/>
            <person name="Lilla S."/>
            <person name="Espagne C."/>
            <person name="Meinnel T."/>
            <person name="Giglione C."/>
        </authorList>
    </citation>
    <scope>IDENTIFICATION BY MASS SPECTROMETRY [LARGE SCALE ANALYSIS]</scope>
</reference>
<reference key="7">
    <citation type="journal article" date="2016" name="PLoS Genet.">
        <title>Arabidopsis COG complex subunits COG3 and COG8 modulate golgi morphology, vesicle trafficking homeostasis and are essential for pollen tube growth.</title>
        <authorList>
            <person name="Tan X."/>
            <person name="Cao K."/>
            <person name="Liu F."/>
            <person name="Li Y."/>
            <person name="Li P."/>
            <person name="Gao C."/>
            <person name="Ding Y."/>
            <person name="Lan Z."/>
            <person name="Shi Z."/>
            <person name="Rui Q."/>
            <person name="Feng Y."/>
            <person name="Liu Y."/>
            <person name="Zhao Y."/>
            <person name="Wu C."/>
            <person name="Zhang Q."/>
            <person name="Li Y."/>
            <person name="Jiang L."/>
            <person name="Bao Y."/>
        </authorList>
    </citation>
    <scope>INTERACTION WITH COG5 AND COG6</scope>
    <scope>GENE FAMILY</scope>
    <scope>NOMENCLATURE</scope>
</reference>
<protein>
    <recommendedName>
        <fullName evidence="7">Conserved oligomeric Golgi complex subunit 7</fullName>
        <shortName evidence="7">COG complex subunit 7</shortName>
    </recommendedName>
    <alternativeName>
        <fullName evidence="7">Component of oligomeric Golgi complex 7</fullName>
    </alternativeName>
    <alternativeName>
        <fullName evidence="6">Protein EMBRYO YELLOW</fullName>
    </alternativeName>
</protein>
<organism>
    <name type="scientific">Arabidopsis thaliana</name>
    <name type="common">Mouse-ear cress</name>
    <dbReference type="NCBI Taxonomy" id="3702"/>
    <lineage>
        <taxon>Eukaryota</taxon>
        <taxon>Viridiplantae</taxon>
        <taxon>Streptophyta</taxon>
        <taxon>Embryophyta</taxon>
        <taxon>Tracheophyta</taxon>
        <taxon>Spermatophyta</taxon>
        <taxon>Magnoliopsida</taxon>
        <taxon>eudicotyledons</taxon>
        <taxon>Gunneridae</taxon>
        <taxon>Pentapetalae</taxon>
        <taxon>rosids</taxon>
        <taxon>malvids</taxon>
        <taxon>Brassicales</taxon>
        <taxon>Brassicaceae</taxon>
        <taxon>Camelineae</taxon>
        <taxon>Arabidopsis</taxon>
    </lineage>
</organism>
<comment type="function">
    <text evidence="4">Required for normal Golgi function (PubMed:18422605). Necessary for embryo development and pigmentation, especially for the expansion of cells and organs, and for the formation of the organized shoot apical meristem (SAM) (PubMed:18422605). Probably involved in the generation of the extra-cellular matrix (PubMed:18422605).</text>
</comment>
<comment type="subunit">
    <text evidence="5 9">Component of the conserved oligomeric Golgi complex which is composed of eight different subunits and is required for normal Golgi morphology and localization (Probable). Interacts with COG5 and COG6 (PubMed:27448097).</text>
</comment>
<comment type="subcellular location">
    <subcellularLocation>
        <location evidence="1">Golgi apparatus membrane</location>
        <topology evidence="1">Peripheral membrane protein</topology>
    </subcellularLocation>
</comment>
<comment type="disruption phenotype">
    <text evidence="4">Abnormal coloration and morphology of embryos leading to bushy plants, with aberrant organization of the shoot apical meristem (SAM) and unexpanded leaves with irregular phyllotaxy, as well as small and round epidermal cells (PubMed:18422605). Disrupted hydrophobic layers of epidermal cells (PubMed:18422605). Mislocalization of Golgi proteins (e.g. ERD2) and altered size of the Golgi apparatus (PubMed:18422605).</text>
</comment>
<comment type="similarity">
    <text evidence="8">Belongs to the COG7 family.</text>
</comment>
<gene>
    <name evidence="7" type="primary">COG7</name>
    <name evidence="6" type="synonym">EYE</name>
    <name evidence="10" type="ordered locus">At5g51430</name>
    <name evidence="11" type="ORF">MFG13.14</name>
</gene>
<accession>Q9FGN0</accession>
<accession>A0A097PSW2</accession>
<accession>B1Q4S9</accession>
<accession>Q0WQF0</accession>
<sequence>MMLDLGPFSDEKFDAKRWVNSSCQARHPQDSLEKHLVDLEMKLQIASEEIGASLEEQSGGALLRVPRATRDVLRLRDDAVSLRGSVAGILQKLKKAEGSSADCIAALARVDNVKQRMEAAYKTLQDAAGLTQLSSTVEDVFASGDLPRAAETLASMRNCLSAVGEVAEFANVRKQLEVLEDRLEAMVQPRLTDALTYHKVDVAQDLRVILIRIGRFKSLELQYSKVRLKPIKQLWEDFDTKQRANKLANERSESQRLSSGDEFQSTSSQTSFASWLTSFYDELLLYLEQEWKWCMVAFPDDYMTLVPKLLVETMGVLGASFVSRLNLATGDAVPETKALAKGVMDLLSGDLPKGINIQTKHLEALIELHNVTGSFARNIQHLFAESELRILIDTLKAVYSPFESFKQKYGKMERAILSSEIAVVDLRGAVTRGVGAQGIELSETVRRMEESIPQVVVLLEAAVERCIGFTGGSEADELILALDDIMLQYISMLQETLKSLRVVCGVDGTGDGVGSKKDASAEKRESSRKMDLTSNEEWSIVQGALQILTVADCLTSRSSVFEASLRATLARLNSSLSISLFGTNLDHNLSHLKSEQTAGDLSMAGRASMDVAAIRLVDVPEKAHKLLNLLEQSKDPRFHALPLASQRVAAFADTVNELVYDVLISKVRQRLGEVSRLPIWSSVEEQTAFPLPNFSSYPQSYVTSVGEYLLTLPQQLEPLAEGISTNGDSNNEDAQFFATEWMFKVAEGATALYMDQLRGIQYISDRGAQQLSVDIEYLSNVLSALSMPIPPVLATFQTCLATPRGELKDVMKSEAGNELDCPTANLVCKMRRISFD</sequence>
<keyword id="KW-0175">Coiled coil</keyword>
<keyword id="KW-0333">Golgi apparatus</keyword>
<keyword id="KW-0472">Membrane</keyword>
<keyword id="KW-0653">Protein transport</keyword>
<keyword id="KW-1185">Reference proteome</keyword>
<keyword id="KW-0813">Transport</keyword>
<evidence type="ECO:0000250" key="1">
    <source>
        <dbReference type="UniProtKB" id="P83436"/>
    </source>
</evidence>
<evidence type="ECO:0000255" key="2"/>
<evidence type="ECO:0000256" key="3">
    <source>
        <dbReference type="SAM" id="MobiDB-lite"/>
    </source>
</evidence>
<evidence type="ECO:0000269" key="4">
    <source>
    </source>
</evidence>
<evidence type="ECO:0000269" key="5">
    <source>
    </source>
</evidence>
<evidence type="ECO:0000303" key="6">
    <source>
    </source>
</evidence>
<evidence type="ECO:0000303" key="7">
    <source>
    </source>
</evidence>
<evidence type="ECO:0000305" key="8"/>
<evidence type="ECO:0000305" key="9">
    <source>
    </source>
</evidence>
<evidence type="ECO:0000312" key="10">
    <source>
        <dbReference type="Araport" id="AT5G51430"/>
    </source>
</evidence>
<evidence type="ECO:0000312" key="11">
    <source>
        <dbReference type="EMBL" id="BAB09754.1"/>
    </source>
</evidence>